<keyword id="KW-0029">Amino-acid transport</keyword>
<keyword id="KW-1003">Cell membrane</keyword>
<keyword id="KW-0325">Glycoprotein</keyword>
<keyword id="KW-0472">Membrane</keyword>
<keyword id="KW-1185">Reference proteome</keyword>
<keyword id="KW-0812">Transmembrane</keyword>
<keyword id="KW-1133">Transmembrane helix</keyword>
<keyword id="KW-0813">Transport</keyword>
<dbReference type="EMBL" id="CP017628">
    <property type="protein sequence ID" value="AOW30029.1"/>
    <property type="molecule type" value="Genomic_DNA"/>
</dbReference>
<dbReference type="RefSeq" id="XP_019330993.1">
    <property type="nucleotide sequence ID" value="XM_019475448.1"/>
</dbReference>
<dbReference type="SMR" id="A0A1D8PPG4"/>
<dbReference type="FunCoup" id="A0A1D8PPG4">
    <property type="interactions" value="190"/>
</dbReference>
<dbReference type="STRING" id="237561.A0A1D8PPG4"/>
<dbReference type="GlyCosmos" id="A0A1D8PPG4">
    <property type="glycosylation" value="1 site, No reported glycans"/>
</dbReference>
<dbReference type="EnsemblFungi" id="C6_00830C_A-T">
    <property type="protein sequence ID" value="C6_00830C_A-T-p1"/>
    <property type="gene ID" value="C6_00830C_A"/>
</dbReference>
<dbReference type="GeneID" id="3647066"/>
<dbReference type="KEGG" id="cal:CAALFM_C600830CA"/>
<dbReference type="CGD" id="CAL0000197464">
    <property type="gene designation" value="CAN3"/>
</dbReference>
<dbReference type="VEuPathDB" id="FungiDB:C6_00830C_A"/>
<dbReference type="InParanoid" id="A0A1D8PPG4"/>
<dbReference type="OrthoDB" id="3900342at2759"/>
<dbReference type="Proteomes" id="UP000000559">
    <property type="component" value="Chromosome 6"/>
</dbReference>
<dbReference type="GO" id="GO:0016020">
    <property type="term" value="C:membrane"/>
    <property type="evidence" value="ECO:0000318"/>
    <property type="project" value="GO_Central"/>
</dbReference>
<dbReference type="GO" id="GO:0005886">
    <property type="term" value="C:plasma membrane"/>
    <property type="evidence" value="ECO:0007669"/>
    <property type="project" value="UniProtKB-SubCell"/>
</dbReference>
<dbReference type="GO" id="GO:0015171">
    <property type="term" value="F:amino acid transmembrane transporter activity"/>
    <property type="evidence" value="ECO:0000318"/>
    <property type="project" value="GO_Central"/>
</dbReference>
<dbReference type="GO" id="GO:0003333">
    <property type="term" value="P:amino acid transmembrane transport"/>
    <property type="evidence" value="ECO:0000318"/>
    <property type="project" value="GO_Central"/>
</dbReference>
<dbReference type="FunFam" id="1.20.1740.10:FF:000001">
    <property type="entry name" value="Amino acid permease"/>
    <property type="match status" value="1"/>
</dbReference>
<dbReference type="Gene3D" id="1.20.1740.10">
    <property type="entry name" value="Amino acid/polyamine transporter I"/>
    <property type="match status" value="1"/>
</dbReference>
<dbReference type="InterPro" id="IPR004841">
    <property type="entry name" value="AA-permease/SLC12A_dom"/>
</dbReference>
<dbReference type="InterPro" id="IPR004840">
    <property type="entry name" value="Amino_acid_permease_CS"/>
</dbReference>
<dbReference type="InterPro" id="IPR050524">
    <property type="entry name" value="APC_YAT"/>
</dbReference>
<dbReference type="PANTHER" id="PTHR43341">
    <property type="entry name" value="AMINO ACID PERMEASE"/>
    <property type="match status" value="1"/>
</dbReference>
<dbReference type="PANTHER" id="PTHR43341:SF4">
    <property type="entry name" value="ARGININE PERMEASE CAN1-RELATED"/>
    <property type="match status" value="1"/>
</dbReference>
<dbReference type="Pfam" id="PF00324">
    <property type="entry name" value="AA_permease"/>
    <property type="match status" value="1"/>
</dbReference>
<dbReference type="PIRSF" id="PIRSF006060">
    <property type="entry name" value="AA_transporter"/>
    <property type="match status" value="1"/>
</dbReference>
<dbReference type="PROSITE" id="PS00218">
    <property type="entry name" value="AMINO_ACID_PERMEASE_1"/>
    <property type="match status" value="1"/>
</dbReference>
<organism>
    <name type="scientific">Candida albicans (strain SC5314 / ATCC MYA-2876)</name>
    <name type="common">Yeast</name>
    <dbReference type="NCBI Taxonomy" id="237561"/>
    <lineage>
        <taxon>Eukaryota</taxon>
        <taxon>Fungi</taxon>
        <taxon>Dikarya</taxon>
        <taxon>Ascomycota</taxon>
        <taxon>Saccharomycotina</taxon>
        <taxon>Pichiomycetes</taxon>
        <taxon>Debaryomycetaceae</taxon>
        <taxon>Candida/Lodderomyces clade</taxon>
        <taxon>Candida</taxon>
    </lineage>
</organism>
<reference key="1">
    <citation type="journal article" date="2004" name="Proc. Natl. Acad. Sci. U.S.A.">
        <title>The diploid genome sequence of Candida albicans.</title>
        <authorList>
            <person name="Jones T."/>
            <person name="Federspiel N.A."/>
            <person name="Chibana H."/>
            <person name="Dungan J."/>
            <person name="Kalman S."/>
            <person name="Magee B.B."/>
            <person name="Newport G."/>
            <person name="Thorstenson Y.R."/>
            <person name="Agabian N."/>
            <person name="Magee P.T."/>
            <person name="Davis R.W."/>
            <person name="Scherer S."/>
        </authorList>
    </citation>
    <scope>NUCLEOTIDE SEQUENCE [LARGE SCALE GENOMIC DNA]</scope>
    <source>
        <strain>SC5314 / ATCC MYA-2876</strain>
    </source>
</reference>
<reference key="2">
    <citation type="journal article" date="2007" name="Genome Biol.">
        <title>Assembly of the Candida albicans genome into sixteen supercontigs aligned on the eight chromosomes.</title>
        <authorList>
            <person name="van het Hoog M."/>
            <person name="Rast T.J."/>
            <person name="Martchenko M."/>
            <person name="Grindle S."/>
            <person name="Dignard D."/>
            <person name="Hogues H."/>
            <person name="Cuomo C."/>
            <person name="Berriman M."/>
            <person name="Scherer S."/>
            <person name="Magee B.B."/>
            <person name="Whiteway M."/>
            <person name="Chibana H."/>
            <person name="Nantel A."/>
            <person name="Magee P.T."/>
        </authorList>
    </citation>
    <scope>GENOME REANNOTATION</scope>
    <source>
        <strain>SC5314 / ATCC MYA-2876</strain>
    </source>
</reference>
<reference key="3">
    <citation type="journal article" date="2013" name="Genome Biol.">
        <title>Assembly of a phased diploid Candida albicans genome facilitates allele-specific measurements and provides a simple model for repeat and indel structure.</title>
        <authorList>
            <person name="Muzzey D."/>
            <person name="Schwartz K."/>
            <person name="Weissman J.S."/>
            <person name="Sherlock G."/>
        </authorList>
    </citation>
    <scope>NUCLEOTIDE SEQUENCE [LARGE SCALE GENOMIC DNA]</scope>
    <scope>GENOME REANNOTATION</scope>
    <source>
        <strain>SC5314 / ATCC MYA-2876</strain>
    </source>
</reference>
<reference key="4">
    <citation type="journal article" date="2002" name="Proc. Natl. Acad. Sci. U.S.A.">
        <title>Metabolic specialization associated with phenotypic switching in Candidaalbicans.</title>
        <authorList>
            <person name="Lan C.Y."/>
            <person name="Newport G."/>
            <person name="Murillo L.A."/>
            <person name="Jones T."/>
            <person name="Scherer S."/>
            <person name="Davis R.W."/>
            <person name="Agabian N."/>
        </authorList>
    </citation>
    <scope>INDUCTION</scope>
</reference>
<reference key="5">
    <citation type="journal article" date="2011" name="J. Biol. Chem.">
        <title>Cap2-HAP complex is a critical transcriptional regulator that has dual but contrasting roles in regulation of iron homeostasis in Candida albicans.</title>
        <authorList>
            <person name="Singh R.P."/>
            <person name="Prasad H.K."/>
            <person name="Sinha I."/>
            <person name="Agarwal N."/>
            <person name="Natarajan K."/>
        </authorList>
    </citation>
    <scope>INDUCTION</scope>
</reference>
<protein>
    <recommendedName>
        <fullName evidence="1">Probable lysine/arginine permease CAN3</fullName>
    </recommendedName>
    <alternativeName>
        <fullName evidence="7">Basic amino acids permease CAN3</fullName>
    </alternativeName>
</protein>
<accession>A0A1D8PPG4</accession>
<feature type="chain" id="PRO_0000439805" description="Probable lysine/arginine permease CAN3">
    <location>
        <begin position="1"/>
        <end position="566"/>
    </location>
</feature>
<feature type="transmembrane region" description="Helical" evidence="2">
    <location>
        <begin position="64"/>
        <end position="84"/>
    </location>
</feature>
<feature type="transmembrane region" description="Helical" evidence="2">
    <location>
        <begin position="88"/>
        <end position="108"/>
    </location>
</feature>
<feature type="transmembrane region" description="Helical" evidence="2">
    <location>
        <begin position="143"/>
        <end position="163"/>
    </location>
</feature>
<feature type="transmembrane region" description="Helical" evidence="2">
    <location>
        <begin position="169"/>
        <end position="189"/>
    </location>
</feature>
<feature type="transmembrane region" description="Helical" evidence="2">
    <location>
        <begin position="199"/>
        <end position="219"/>
    </location>
</feature>
<feature type="transmembrane region" description="Helical" evidence="2">
    <location>
        <begin position="253"/>
        <end position="273"/>
    </location>
</feature>
<feature type="transmembrane region" description="Helical" evidence="2">
    <location>
        <begin position="292"/>
        <end position="312"/>
    </location>
</feature>
<feature type="transmembrane region" description="Helical" evidence="2">
    <location>
        <begin position="345"/>
        <end position="365"/>
    </location>
</feature>
<feature type="transmembrane region" description="Helical" evidence="2">
    <location>
        <begin position="389"/>
        <end position="409"/>
    </location>
</feature>
<feature type="transmembrane region" description="Helical" evidence="2">
    <location>
        <begin position="415"/>
        <end position="435"/>
    </location>
</feature>
<feature type="transmembrane region" description="Helical" evidence="2">
    <location>
        <begin position="467"/>
        <end position="487"/>
    </location>
</feature>
<feature type="transmembrane region" description="Helical" evidence="2">
    <location>
        <begin position="499"/>
        <end position="519"/>
    </location>
</feature>
<feature type="glycosylation site" description="N-linked (GlcNAc...) asparagine" evidence="3">
    <location>
        <position position="490"/>
    </location>
</feature>
<comment type="function">
    <text evidence="1">Probable permease for arginine and lysine.</text>
</comment>
<comment type="subcellular location">
    <subcellularLocation>
        <location evidence="1">Cell membrane</location>
        <topology evidence="2">Multi-pass membrane protein</topology>
    </subcellularLocation>
</comment>
<comment type="induction">
    <text evidence="4 5">Expression is regulated upon white-opaque switch (PubMed:12397174). Expression is repressed by HAP43 (PubMed:21592964).</text>
</comment>
<comment type="similarity">
    <text evidence="7">Belongs to the amino acid-polyamine-organocation (APC) superfamily. YAT (TC 2.A.3.10) family.</text>
</comment>
<evidence type="ECO:0000250" key="1">
    <source>
        <dbReference type="UniProtKB" id="A0A1D8PPI5"/>
    </source>
</evidence>
<evidence type="ECO:0000255" key="2"/>
<evidence type="ECO:0000255" key="3">
    <source>
        <dbReference type="PROSITE-ProRule" id="PRU00498"/>
    </source>
</evidence>
<evidence type="ECO:0000269" key="4">
    <source>
    </source>
</evidence>
<evidence type="ECO:0000269" key="5">
    <source>
    </source>
</evidence>
<evidence type="ECO:0000303" key="6">
    <source>
    </source>
</evidence>
<evidence type="ECO:0000305" key="7"/>
<sequence length="566" mass="62895">MVLLKEKPRTIGTDSDNSIYKDIEQSITPPSDKNEIFIDQINNDRITEYDSHGEVKRDLKARHVAMIGIGSTIGTGLFISTGHLLSQTGPVMSLISFLFVTTICFSVTQSLGEMATYIPVSGSFVQFITRWVSKSCGAANGWLYGWSWAITFGLELSIVGQVIQFWTDAIPLAAWISIFFVLLTALNLFPVKFYGEIEFWMASIKLTAVIGWIIYAFCMVCGAGKTGPVGFRYWRNGYAWGDGMIVSNNGKYAIAFINGLINAVFTFQGTELVAITAGEASPKALKSAIRKVMFRILVFYVLCMLFIGLLVPYNDPKLTEDGGFTRNSPFLIAMENSGTKVLPHIFNAVIVTTIISAGNSTVYAGSRIFYGLAESGVAPKIFLSTTKAGVPYVAVLFTAAFGALGYLVVSNDGTVVFNWLLNIAATAGLVAWGFISVSHIRFMQVLKQRGISRDTLPFKAFFMPYSAYYAAIVVFTVALIQGFTVFWDFNATDFFTAYVSLIVFVVWWIMFHFFFFGFGKQAWKWSNVLIPLEECDIDTGVRDINDIEFDVPPPKNLWQKFWLIIA</sequence>
<proteinExistence type="evidence at transcript level"/>
<gene>
    <name evidence="6" type="primary">CAN3</name>
    <name type="ordered locus">CAALFM_C600830CA</name>
</gene>
<name>CAN3_CANAL</name>